<comment type="function">
    <text evidence="1">Plays an important role in the de novo pathway of purine nucleotide biosynthesis. Catalyzes the first committed step in the biosynthesis of AMP from IMP.</text>
</comment>
<comment type="catalytic activity">
    <reaction evidence="1">
        <text>IMP + L-aspartate + GTP = N(6)-(1,2-dicarboxyethyl)-AMP + GDP + phosphate + 2 H(+)</text>
        <dbReference type="Rhea" id="RHEA:15753"/>
        <dbReference type="ChEBI" id="CHEBI:15378"/>
        <dbReference type="ChEBI" id="CHEBI:29991"/>
        <dbReference type="ChEBI" id="CHEBI:37565"/>
        <dbReference type="ChEBI" id="CHEBI:43474"/>
        <dbReference type="ChEBI" id="CHEBI:57567"/>
        <dbReference type="ChEBI" id="CHEBI:58053"/>
        <dbReference type="ChEBI" id="CHEBI:58189"/>
        <dbReference type="EC" id="6.3.4.4"/>
    </reaction>
</comment>
<comment type="cofactor">
    <cofactor evidence="1">
        <name>Mg(2+)</name>
        <dbReference type="ChEBI" id="CHEBI:18420"/>
    </cofactor>
    <text evidence="1">Binds 1 Mg(2+) ion per subunit.</text>
</comment>
<comment type="pathway">
    <text evidence="1">Purine metabolism; AMP biosynthesis via de novo pathway; AMP from IMP: step 1/2.</text>
</comment>
<comment type="subunit">
    <text evidence="1">Homodimer.</text>
</comment>
<comment type="subcellular location">
    <subcellularLocation>
        <location evidence="1">Cytoplasm</location>
    </subcellularLocation>
</comment>
<comment type="similarity">
    <text evidence="1">Belongs to the adenylosuccinate synthetase family.</text>
</comment>
<protein>
    <recommendedName>
        <fullName evidence="1">Adenylosuccinate synthetase</fullName>
        <shortName evidence="1">AMPSase</shortName>
        <shortName evidence="1">AdSS</shortName>
        <ecNumber evidence="1">6.3.4.4</ecNumber>
    </recommendedName>
    <alternativeName>
        <fullName evidence="1">IMP--aspartate ligase</fullName>
    </alternativeName>
</protein>
<gene>
    <name evidence="1" type="primary">purA</name>
    <name type="ordered locus">SSON_4362</name>
</gene>
<organism>
    <name type="scientific">Shigella sonnei (strain Ss046)</name>
    <dbReference type="NCBI Taxonomy" id="300269"/>
    <lineage>
        <taxon>Bacteria</taxon>
        <taxon>Pseudomonadati</taxon>
        <taxon>Pseudomonadota</taxon>
        <taxon>Gammaproteobacteria</taxon>
        <taxon>Enterobacterales</taxon>
        <taxon>Enterobacteriaceae</taxon>
        <taxon>Shigella</taxon>
    </lineage>
</organism>
<evidence type="ECO:0000255" key="1">
    <source>
        <dbReference type="HAMAP-Rule" id="MF_00011"/>
    </source>
</evidence>
<accession>Q3YUG6</accession>
<reference key="1">
    <citation type="journal article" date="2005" name="Nucleic Acids Res.">
        <title>Genome dynamics and diversity of Shigella species, the etiologic agents of bacillary dysentery.</title>
        <authorList>
            <person name="Yang F."/>
            <person name="Yang J."/>
            <person name="Zhang X."/>
            <person name="Chen L."/>
            <person name="Jiang Y."/>
            <person name="Yan Y."/>
            <person name="Tang X."/>
            <person name="Wang J."/>
            <person name="Xiong Z."/>
            <person name="Dong J."/>
            <person name="Xue Y."/>
            <person name="Zhu Y."/>
            <person name="Xu X."/>
            <person name="Sun L."/>
            <person name="Chen S."/>
            <person name="Nie H."/>
            <person name="Peng J."/>
            <person name="Xu J."/>
            <person name="Wang Y."/>
            <person name="Yuan Z."/>
            <person name="Wen Y."/>
            <person name="Yao Z."/>
            <person name="Shen Y."/>
            <person name="Qiang B."/>
            <person name="Hou Y."/>
            <person name="Yu J."/>
            <person name="Jin Q."/>
        </authorList>
    </citation>
    <scope>NUCLEOTIDE SEQUENCE [LARGE SCALE GENOMIC DNA]</scope>
    <source>
        <strain>Ss046</strain>
    </source>
</reference>
<proteinExistence type="inferred from homology"/>
<sequence length="432" mass="47315">MGNNVVVLGTQWGDEGKGKIVDLLTERAKYVVRYQGGHNAGHTLVINGEKTVLHLIPSGILRENVTSIIGNGVVLSPAALMKEMKELEDRGIPVRERLLLSEACPLILDYHVALDNAREKARGAKAIGTTGRGIGPAYEDKVARRGLRVGDLFDKETFAEKLKEVMEYHNFQLVNYYKAEAVDYQKVLDDTMAVADILTSMVVDVSDLLDQARQRGDFVMFEGAQGTLLDIDHGTYPYVTSSNTTAGGVATGSGLGPRYVDYVLGILKAYSTRVGAGPFPTELFDETGEFLCKQGNEFGATTGRRRRTGWLDTVAVRRAVQLNSLSGFCLTKLDVLDGLKEVKLCVAYRMPDGREVATTPLAADDWKGVEPIYETMPGWSESTFGVKDRSGLPQAALNYIKRIEELTGVPIDIISTGPDRTETMILRDPFDA</sequence>
<feature type="chain" id="PRO_0000224320" description="Adenylosuccinate synthetase">
    <location>
        <begin position="1"/>
        <end position="432"/>
    </location>
</feature>
<feature type="active site" description="Proton acceptor" evidence="1">
    <location>
        <position position="14"/>
    </location>
</feature>
<feature type="active site" description="Proton donor" evidence="1">
    <location>
        <position position="42"/>
    </location>
</feature>
<feature type="binding site" evidence="1">
    <location>
        <begin position="13"/>
        <end position="19"/>
    </location>
    <ligand>
        <name>GTP</name>
        <dbReference type="ChEBI" id="CHEBI:37565"/>
    </ligand>
</feature>
<feature type="binding site" description="in other chain" evidence="1">
    <location>
        <begin position="14"/>
        <end position="17"/>
    </location>
    <ligand>
        <name>IMP</name>
        <dbReference type="ChEBI" id="CHEBI:58053"/>
        <note>ligand shared between dimeric partners</note>
    </ligand>
</feature>
<feature type="binding site" evidence="1">
    <location>
        <position position="14"/>
    </location>
    <ligand>
        <name>Mg(2+)</name>
        <dbReference type="ChEBI" id="CHEBI:18420"/>
    </ligand>
</feature>
<feature type="binding site" description="in other chain" evidence="1">
    <location>
        <begin position="39"/>
        <end position="42"/>
    </location>
    <ligand>
        <name>IMP</name>
        <dbReference type="ChEBI" id="CHEBI:58053"/>
        <note>ligand shared between dimeric partners</note>
    </ligand>
</feature>
<feature type="binding site" evidence="1">
    <location>
        <begin position="41"/>
        <end position="43"/>
    </location>
    <ligand>
        <name>GTP</name>
        <dbReference type="ChEBI" id="CHEBI:37565"/>
    </ligand>
</feature>
<feature type="binding site" evidence="1">
    <location>
        <position position="41"/>
    </location>
    <ligand>
        <name>Mg(2+)</name>
        <dbReference type="ChEBI" id="CHEBI:18420"/>
    </ligand>
</feature>
<feature type="binding site" description="in other chain" evidence="1">
    <location>
        <position position="130"/>
    </location>
    <ligand>
        <name>IMP</name>
        <dbReference type="ChEBI" id="CHEBI:58053"/>
        <note>ligand shared between dimeric partners</note>
    </ligand>
</feature>
<feature type="binding site" evidence="1">
    <location>
        <position position="144"/>
    </location>
    <ligand>
        <name>IMP</name>
        <dbReference type="ChEBI" id="CHEBI:58053"/>
        <note>ligand shared between dimeric partners</note>
    </ligand>
</feature>
<feature type="binding site" description="in other chain" evidence="1">
    <location>
        <position position="225"/>
    </location>
    <ligand>
        <name>IMP</name>
        <dbReference type="ChEBI" id="CHEBI:58053"/>
        <note>ligand shared between dimeric partners</note>
    </ligand>
</feature>
<feature type="binding site" description="in other chain" evidence="1">
    <location>
        <position position="240"/>
    </location>
    <ligand>
        <name>IMP</name>
        <dbReference type="ChEBI" id="CHEBI:58053"/>
        <note>ligand shared between dimeric partners</note>
    </ligand>
</feature>
<feature type="binding site" evidence="1">
    <location>
        <begin position="300"/>
        <end position="306"/>
    </location>
    <ligand>
        <name>substrate</name>
    </ligand>
</feature>
<feature type="binding site" description="in other chain" evidence="1">
    <location>
        <position position="304"/>
    </location>
    <ligand>
        <name>IMP</name>
        <dbReference type="ChEBI" id="CHEBI:58053"/>
        <note>ligand shared between dimeric partners</note>
    </ligand>
</feature>
<feature type="binding site" evidence="1">
    <location>
        <position position="306"/>
    </location>
    <ligand>
        <name>GTP</name>
        <dbReference type="ChEBI" id="CHEBI:37565"/>
    </ligand>
</feature>
<feature type="binding site" evidence="1">
    <location>
        <begin position="332"/>
        <end position="334"/>
    </location>
    <ligand>
        <name>GTP</name>
        <dbReference type="ChEBI" id="CHEBI:37565"/>
    </ligand>
</feature>
<feature type="binding site" evidence="1">
    <location>
        <begin position="415"/>
        <end position="417"/>
    </location>
    <ligand>
        <name>GTP</name>
        <dbReference type="ChEBI" id="CHEBI:37565"/>
    </ligand>
</feature>
<dbReference type="EC" id="6.3.4.4" evidence="1"/>
<dbReference type="EMBL" id="CP000038">
    <property type="protein sequence ID" value="AAZ90846.1"/>
    <property type="molecule type" value="Genomic_DNA"/>
</dbReference>
<dbReference type="RefSeq" id="WP_000527953.1">
    <property type="nucleotide sequence ID" value="NC_007384.1"/>
</dbReference>
<dbReference type="SMR" id="Q3YUG6"/>
<dbReference type="GeneID" id="93777644"/>
<dbReference type="KEGG" id="ssn:SSON_4362"/>
<dbReference type="HOGENOM" id="CLU_029848_0_0_6"/>
<dbReference type="UniPathway" id="UPA00075">
    <property type="reaction ID" value="UER00335"/>
</dbReference>
<dbReference type="Proteomes" id="UP000002529">
    <property type="component" value="Chromosome"/>
</dbReference>
<dbReference type="GO" id="GO:0005737">
    <property type="term" value="C:cytoplasm"/>
    <property type="evidence" value="ECO:0007669"/>
    <property type="project" value="UniProtKB-SubCell"/>
</dbReference>
<dbReference type="GO" id="GO:0004019">
    <property type="term" value="F:adenylosuccinate synthase activity"/>
    <property type="evidence" value="ECO:0007669"/>
    <property type="project" value="UniProtKB-UniRule"/>
</dbReference>
<dbReference type="GO" id="GO:0005525">
    <property type="term" value="F:GTP binding"/>
    <property type="evidence" value="ECO:0007669"/>
    <property type="project" value="UniProtKB-UniRule"/>
</dbReference>
<dbReference type="GO" id="GO:0000287">
    <property type="term" value="F:magnesium ion binding"/>
    <property type="evidence" value="ECO:0007669"/>
    <property type="project" value="UniProtKB-UniRule"/>
</dbReference>
<dbReference type="GO" id="GO:0044208">
    <property type="term" value="P:'de novo' AMP biosynthetic process"/>
    <property type="evidence" value="ECO:0007669"/>
    <property type="project" value="UniProtKB-UniRule"/>
</dbReference>
<dbReference type="GO" id="GO:0046040">
    <property type="term" value="P:IMP metabolic process"/>
    <property type="evidence" value="ECO:0007669"/>
    <property type="project" value="TreeGrafter"/>
</dbReference>
<dbReference type="CDD" id="cd03108">
    <property type="entry name" value="AdSS"/>
    <property type="match status" value="1"/>
</dbReference>
<dbReference type="FunFam" id="1.10.300.10:FF:000001">
    <property type="entry name" value="Adenylosuccinate synthetase"/>
    <property type="match status" value="1"/>
</dbReference>
<dbReference type="FunFam" id="3.90.170.10:FF:000001">
    <property type="entry name" value="Adenylosuccinate synthetase"/>
    <property type="match status" value="1"/>
</dbReference>
<dbReference type="Gene3D" id="3.40.440.10">
    <property type="entry name" value="Adenylosuccinate Synthetase, subunit A, domain 1"/>
    <property type="match status" value="1"/>
</dbReference>
<dbReference type="Gene3D" id="1.10.300.10">
    <property type="entry name" value="Adenylosuccinate Synthetase, subunit A, domain 2"/>
    <property type="match status" value="1"/>
</dbReference>
<dbReference type="Gene3D" id="3.90.170.10">
    <property type="entry name" value="Adenylosuccinate Synthetase, subunit A, domain 3"/>
    <property type="match status" value="1"/>
</dbReference>
<dbReference type="HAMAP" id="MF_00011">
    <property type="entry name" value="Adenylosucc_synth"/>
    <property type="match status" value="1"/>
</dbReference>
<dbReference type="InterPro" id="IPR018220">
    <property type="entry name" value="Adenylosuccin_syn_GTP-bd"/>
</dbReference>
<dbReference type="InterPro" id="IPR033128">
    <property type="entry name" value="Adenylosuccin_syn_Lys_AS"/>
</dbReference>
<dbReference type="InterPro" id="IPR042109">
    <property type="entry name" value="Adenylosuccinate_synth_dom1"/>
</dbReference>
<dbReference type="InterPro" id="IPR042110">
    <property type="entry name" value="Adenylosuccinate_synth_dom2"/>
</dbReference>
<dbReference type="InterPro" id="IPR042111">
    <property type="entry name" value="Adenylosuccinate_synth_dom3"/>
</dbReference>
<dbReference type="InterPro" id="IPR001114">
    <property type="entry name" value="Adenylosuccinate_synthetase"/>
</dbReference>
<dbReference type="InterPro" id="IPR027417">
    <property type="entry name" value="P-loop_NTPase"/>
</dbReference>
<dbReference type="NCBIfam" id="NF002223">
    <property type="entry name" value="PRK01117.1"/>
    <property type="match status" value="1"/>
</dbReference>
<dbReference type="NCBIfam" id="TIGR00184">
    <property type="entry name" value="purA"/>
    <property type="match status" value="1"/>
</dbReference>
<dbReference type="PANTHER" id="PTHR11846">
    <property type="entry name" value="ADENYLOSUCCINATE SYNTHETASE"/>
    <property type="match status" value="1"/>
</dbReference>
<dbReference type="PANTHER" id="PTHR11846:SF0">
    <property type="entry name" value="ADENYLOSUCCINATE SYNTHETASE"/>
    <property type="match status" value="1"/>
</dbReference>
<dbReference type="Pfam" id="PF00709">
    <property type="entry name" value="Adenylsucc_synt"/>
    <property type="match status" value="1"/>
</dbReference>
<dbReference type="SMART" id="SM00788">
    <property type="entry name" value="Adenylsucc_synt"/>
    <property type="match status" value="1"/>
</dbReference>
<dbReference type="SUPFAM" id="SSF52540">
    <property type="entry name" value="P-loop containing nucleoside triphosphate hydrolases"/>
    <property type="match status" value="1"/>
</dbReference>
<dbReference type="PROSITE" id="PS01266">
    <property type="entry name" value="ADENYLOSUCCIN_SYN_1"/>
    <property type="match status" value="1"/>
</dbReference>
<dbReference type="PROSITE" id="PS00513">
    <property type="entry name" value="ADENYLOSUCCIN_SYN_2"/>
    <property type="match status" value="1"/>
</dbReference>
<name>PURA_SHISS</name>
<keyword id="KW-0963">Cytoplasm</keyword>
<keyword id="KW-0342">GTP-binding</keyword>
<keyword id="KW-0436">Ligase</keyword>
<keyword id="KW-0460">Magnesium</keyword>
<keyword id="KW-0479">Metal-binding</keyword>
<keyword id="KW-0547">Nucleotide-binding</keyword>
<keyword id="KW-0658">Purine biosynthesis</keyword>
<keyword id="KW-1185">Reference proteome</keyword>